<sequence>MKRAFIMVLDSFGIGATEDAERFGDVGADTLGHIAEACAKGEADNGRKGPLNLPNLTRLGLAKAHEGSTGFIPAGMDGNAEVIGAYAWAHEMSSGKDTPSGHWEIAGVPVLFEWGYFSDHENSFPQELLDKLVERANLPGYLGNCHSSGTVILDQLGEEHMKTGKPIFYTSADSVFQIACHEETFGLDKLYELCEIAREELTNGGYNIGRVIARPFIGDKAGNFQRTGNRHDLAVEPPAPTVLQKLVDEKHGQVVSVGKIADIYANCGITKKVKATGLDALFDATIKEMKEAGDNTIVFTNFVDFDSSWGHRRDVAGYAAGLELFDRRLPELMSLLRDDDILILTADHGCDPTWTGTDHTREHIPVLVYGPKVKPGSLGHRETFADIGQTLAKYFGTSDMEYGKAMF</sequence>
<name>DEOB_SHIFL</name>
<accession>P0A6K9</accession>
<accession>P07651</accession>
<gene>
    <name evidence="1" type="primary">deoB</name>
    <name type="ordered locus">SF4415</name>
    <name type="ordered locus">S4686</name>
</gene>
<reference key="1">
    <citation type="journal article" date="2002" name="Nucleic Acids Res.">
        <title>Genome sequence of Shigella flexneri 2a: insights into pathogenicity through comparison with genomes of Escherichia coli K12 and O157.</title>
        <authorList>
            <person name="Jin Q."/>
            <person name="Yuan Z."/>
            <person name="Xu J."/>
            <person name="Wang Y."/>
            <person name="Shen Y."/>
            <person name="Lu W."/>
            <person name="Wang J."/>
            <person name="Liu H."/>
            <person name="Yang J."/>
            <person name="Yang F."/>
            <person name="Zhang X."/>
            <person name="Zhang J."/>
            <person name="Yang G."/>
            <person name="Wu H."/>
            <person name="Qu D."/>
            <person name="Dong J."/>
            <person name="Sun L."/>
            <person name="Xue Y."/>
            <person name="Zhao A."/>
            <person name="Gao Y."/>
            <person name="Zhu J."/>
            <person name="Kan B."/>
            <person name="Ding K."/>
            <person name="Chen S."/>
            <person name="Cheng H."/>
            <person name="Yao Z."/>
            <person name="He B."/>
            <person name="Chen R."/>
            <person name="Ma D."/>
            <person name="Qiang B."/>
            <person name="Wen Y."/>
            <person name="Hou Y."/>
            <person name="Yu J."/>
        </authorList>
    </citation>
    <scope>NUCLEOTIDE SEQUENCE [LARGE SCALE GENOMIC DNA]</scope>
    <source>
        <strain>301 / Serotype 2a</strain>
    </source>
</reference>
<reference key="2">
    <citation type="journal article" date="2003" name="Infect. Immun.">
        <title>Complete genome sequence and comparative genomics of Shigella flexneri serotype 2a strain 2457T.</title>
        <authorList>
            <person name="Wei J."/>
            <person name="Goldberg M.B."/>
            <person name="Burland V."/>
            <person name="Venkatesan M.M."/>
            <person name="Deng W."/>
            <person name="Fournier G."/>
            <person name="Mayhew G.F."/>
            <person name="Plunkett G. III"/>
            <person name="Rose D.J."/>
            <person name="Darling A."/>
            <person name="Mau B."/>
            <person name="Perna N.T."/>
            <person name="Payne S.M."/>
            <person name="Runyen-Janecky L.J."/>
            <person name="Zhou S."/>
            <person name="Schwartz D.C."/>
            <person name="Blattner F.R."/>
        </authorList>
    </citation>
    <scope>NUCLEOTIDE SEQUENCE [LARGE SCALE GENOMIC DNA]</scope>
    <source>
        <strain>ATCC 700930 / 2457T / Serotype 2a</strain>
    </source>
</reference>
<evidence type="ECO:0000255" key="1">
    <source>
        <dbReference type="HAMAP-Rule" id="MF_00740"/>
    </source>
</evidence>
<evidence type="ECO:0000305" key="2"/>
<feature type="chain" id="PRO_0000199838" description="Phosphopentomutase">
    <location>
        <begin position="1"/>
        <end position="407"/>
    </location>
</feature>
<feature type="binding site" evidence="1">
    <location>
        <position position="10"/>
    </location>
    <ligand>
        <name>Mn(2+)</name>
        <dbReference type="ChEBI" id="CHEBI:29035"/>
        <label>1</label>
    </ligand>
</feature>
<feature type="binding site" evidence="1">
    <location>
        <position position="306"/>
    </location>
    <ligand>
        <name>Mn(2+)</name>
        <dbReference type="ChEBI" id="CHEBI:29035"/>
        <label>2</label>
    </ligand>
</feature>
<feature type="binding site" evidence="1">
    <location>
        <position position="311"/>
    </location>
    <ligand>
        <name>Mn(2+)</name>
        <dbReference type="ChEBI" id="CHEBI:29035"/>
        <label>2</label>
    </ligand>
</feature>
<feature type="binding site" evidence="1">
    <location>
        <position position="347"/>
    </location>
    <ligand>
        <name>Mn(2+)</name>
        <dbReference type="ChEBI" id="CHEBI:29035"/>
        <label>1</label>
    </ligand>
</feature>
<feature type="binding site" evidence="1">
    <location>
        <position position="348"/>
    </location>
    <ligand>
        <name>Mn(2+)</name>
        <dbReference type="ChEBI" id="CHEBI:29035"/>
        <label>1</label>
    </ligand>
</feature>
<feature type="binding site" evidence="1">
    <location>
        <position position="359"/>
    </location>
    <ligand>
        <name>Mn(2+)</name>
        <dbReference type="ChEBI" id="CHEBI:29035"/>
        <label>2</label>
    </ligand>
</feature>
<proteinExistence type="inferred from homology"/>
<protein>
    <recommendedName>
        <fullName evidence="1">Phosphopentomutase</fullName>
        <ecNumber evidence="1">5.4.2.7</ecNumber>
    </recommendedName>
    <alternativeName>
        <fullName evidence="1">Phosphodeoxyribomutase</fullName>
    </alternativeName>
</protein>
<dbReference type="EC" id="5.4.2.7" evidence="1"/>
<dbReference type="EMBL" id="AE005674">
    <property type="protein sequence ID" value="AAN45830.1"/>
    <property type="molecule type" value="Genomic_DNA"/>
</dbReference>
<dbReference type="EMBL" id="AE014073">
    <property type="protein sequence ID" value="AAP19604.1"/>
    <property type="molecule type" value="Genomic_DNA"/>
</dbReference>
<dbReference type="RefSeq" id="NP_710123.1">
    <property type="nucleotide sequence ID" value="NC_004337.2"/>
</dbReference>
<dbReference type="RefSeq" id="WP_000816471.1">
    <property type="nucleotide sequence ID" value="NZ_WPGW01000013.1"/>
</dbReference>
<dbReference type="SMR" id="P0A6K9"/>
<dbReference type="STRING" id="198214.SF4415"/>
<dbReference type="PaxDb" id="198214-SF4415"/>
<dbReference type="GeneID" id="1026333"/>
<dbReference type="GeneID" id="89519362"/>
<dbReference type="KEGG" id="sfl:SF4415"/>
<dbReference type="KEGG" id="sfx:S4686"/>
<dbReference type="PATRIC" id="fig|198214.7.peg.5203"/>
<dbReference type="HOGENOM" id="CLU_053861_0_0_6"/>
<dbReference type="UniPathway" id="UPA00002">
    <property type="reaction ID" value="UER00467"/>
</dbReference>
<dbReference type="Proteomes" id="UP000001006">
    <property type="component" value="Chromosome"/>
</dbReference>
<dbReference type="Proteomes" id="UP000002673">
    <property type="component" value="Chromosome"/>
</dbReference>
<dbReference type="GO" id="GO:0005829">
    <property type="term" value="C:cytosol"/>
    <property type="evidence" value="ECO:0007669"/>
    <property type="project" value="TreeGrafter"/>
</dbReference>
<dbReference type="GO" id="GO:0000287">
    <property type="term" value="F:magnesium ion binding"/>
    <property type="evidence" value="ECO:0007669"/>
    <property type="project" value="InterPro"/>
</dbReference>
<dbReference type="GO" id="GO:0030145">
    <property type="term" value="F:manganese ion binding"/>
    <property type="evidence" value="ECO:0007669"/>
    <property type="project" value="UniProtKB-UniRule"/>
</dbReference>
<dbReference type="GO" id="GO:0008973">
    <property type="term" value="F:phosphopentomutase activity"/>
    <property type="evidence" value="ECO:0007669"/>
    <property type="project" value="UniProtKB-UniRule"/>
</dbReference>
<dbReference type="GO" id="GO:0006018">
    <property type="term" value="P:2-deoxyribose 1-phosphate catabolic process"/>
    <property type="evidence" value="ECO:0007669"/>
    <property type="project" value="UniProtKB-UniRule"/>
</dbReference>
<dbReference type="GO" id="GO:0006015">
    <property type="term" value="P:5-phosphoribose 1-diphosphate biosynthetic process"/>
    <property type="evidence" value="ECO:0007669"/>
    <property type="project" value="UniProtKB-UniPathway"/>
</dbReference>
<dbReference type="GO" id="GO:0043094">
    <property type="term" value="P:metabolic compound salvage"/>
    <property type="evidence" value="ECO:0007669"/>
    <property type="project" value="InterPro"/>
</dbReference>
<dbReference type="GO" id="GO:0009117">
    <property type="term" value="P:nucleotide metabolic process"/>
    <property type="evidence" value="ECO:0007669"/>
    <property type="project" value="InterPro"/>
</dbReference>
<dbReference type="CDD" id="cd16009">
    <property type="entry name" value="PPM"/>
    <property type="match status" value="1"/>
</dbReference>
<dbReference type="FunFam" id="3.30.70.1250:FF:000001">
    <property type="entry name" value="Phosphopentomutase"/>
    <property type="match status" value="1"/>
</dbReference>
<dbReference type="Gene3D" id="3.40.720.10">
    <property type="entry name" value="Alkaline Phosphatase, subunit A"/>
    <property type="match status" value="1"/>
</dbReference>
<dbReference type="Gene3D" id="3.30.70.1250">
    <property type="entry name" value="Phosphopentomutase"/>
    <property type="match status" value="1"/>
</dbReference>
<dbReference type="HAMAP" id="MF_00740">
    <property type="entry name" value="Phosphopentomut"/>
    <property type="match status" value="1"/>
</dbReference>
<dbReference type="InterPro" id="IPR017850">
    <property type="entry name" value="Alkaline_phosphatase_core_sf"/>
</dbReference>
<dbReference type="InterPro" id="IPR010045">
    <property type="entry name" value="DeoB"/>
</dbReference>
<dbReference type="InterPro" id="IPR006124">
    <property type="entry name" value="Metalloenzyme"/>
</dbReference>
<dbReference type="InterPro" id="IPR024052">
    <property type="entry name" value="Phosphopentomutase_DeoB_cap_sf"/>
</dbReference>
<dbReference type="NCBIfam" id="TIGR01696">
    <property type="entry name" value="deoB"/>
    <property type="match status" value="1"/>
</dbReference>
<dbReference type="NCBIfam" id="NF003766">
    <property type="entry name" value="PRK05362.1"/>
    <property type="match status" value="1"/>
</dbReference>
<dbReference type="PANTHER" id="PTHR21110">
    <property type="entry name" value="PHOSPHOPENTOMUTASE"/>
    <property type="match status" value="1"/>
</dbReference>
<dbReference type="PANTHER" id="PTHR21110:SF0">
    <property type="entry name" value="PHOSPHOPENTOMUTASE"/>
    <property type="match status" value="1"/>
</dbReference>
<dbReference type="Pfam" id="PF01676">
    <property type="entry name" value="Metalloenzyme"/>
    <property type="match status" value="1"/>
</dbReference>
<dbReference type="PIRSF" id="PIRSF001491">
    <property type="entry name" value="Ppentomutase"/>
    <property type="match status" value="1"/>
</dbReference>
<dbReference type="SUPFAM" id="SSF53649">
    <property type="entry name" value="Alkaline phosphatase-like"/>
    <property type="match status" value="1"/>
</dbReference>
<dbReference type="SUPFAM" id="SSF143856">
    <property type="entry name" value="DeoB insert domain-like"/>
    <property type="match status" value="1"/>
</dbReference>
<keyword id="KW-0963">Cytoplasm</keyword>
<keyword id="KW-0413">Isomerase</keyword>
<keyword id="KW-0464">Manganese</keyword>
<keyword id="KW-0479">Metal-binding</keyword>
<keyword id="KW-1185">Reference proteome</keyword>
<comment type="function">
    <text evidence="1">Isomerase that catalyzes the conversion of deoxy-ribose 1-phosphate (dRib-1-P) and ribose 1-phosphate (Rib-1-P) to deoxy-ribose 5-phosphate (dRib-5-P) and ribose 5-phosphate (Rib-5-P), respectively.</text>
</comment>
<comment type="catalytic activity">
    <reaction evidence="1">
        <text>2-deoxy-alpha-D-ribose 1-phosphate = 2-deoxy-D-ribose 5-phosphate</text>
        <dbReference type="Rhea" id="RHEA:27658"/>
        <dbReference type="ChEBI" id="CHEBI:57259"/>
        <dbReference type="ChEBI" id="CHEBI:62877"/>
        <dbReference type="EC" id="5.4.2.7"/>
    </reaction>
</comment>
<comment type="catalytic activity">
    <reaction evidence="1">
        <text>alpha-D-ribose 1-phosphate = D-ribose 5-phosphate</text>
        <dbReference type="Rhea" id="RHEA:18793"/>
        <dbReference type="ChEBI" id="CHEBI:57720"/>
        <dbReference type="ChEBI" id="CHEBI:78346"/>
        <dbReference type="EC" id="5.4.2.7"/>
    </reaction>
</comment>
<comment type="cofactor">
    <cofactor evidence="1">
        <name>Mn(2+)</name>
        <dbReference type="ChEBI" id="CHEBI:29035"/>
    </cofactor>
    <text evidence="1">Binds 2 manganese ions.</text>
</comment>
<comment type="pathway">
    <text evidence="1">Carbohydrate degradation; 2-deoxy-D-ribose 1-phosphate degradation; D-glyceraldehyde 3-phosphate and acetaldehyde from 2-deoxy-alpha-D-ribose 1-phosphate: step 1/2.</text>
</comment>
<comment type="subcellular location">
    <subcellularLocation>
        <location evidence="1">Cytoplasm</location>
    </subcellularLocation>
</comment>
<comment type="similarity">
    <text evidence="1 2">Belongs to the phosphopentomutase family.</text>
</comment>
<organism>
    <name type="scientific">Shigella flexneri</name>
    <dbReference type="NCBI Taxonomy" id="623"/>
    <lineage>
        <taxon>Bacteria</taxon>
        <taxon>Pseudomonadati</taxon>
        <taxon>Pseudomonadota</taxon>
        <taxon>Gammaproteobacteria</taxon>
        <taxon>Enterobacterales</taxon>
        <taxon>Enterobacteriaceae</taxon>
        <taxon>Shigella</taxon>
    </lineage>
</organism>